<proteinExistence type="inferred from homology"/>
<reference key="1">
    <citation type="journal article" date="2006" name="J. Bacteriol.">
        <title>The genome sequence of Methanosphaera stadtmanae reveals why this human intestinal archaeon is restricted to methanol and H2 for methane formation and ATP synthesis.</title>
        <authorList>
            <person name="Fricke W.F."/>
            <person name="Seedorf H."/>
            <person name="Henne A."/>
            <person name="Kruer M."/>
            <person name="Liesegang H."/>
            <person name="Hedderich R."/>
            <person name="Gottschalk G."/>
            <person name="Thauer R.K."/>
        </authorList>
    </citation>
    <scope>NUCLEOTIDE SEQUENCE [LARGE SCALE GENOMIC DNA]</scope>
    <source>
        <strain>ATCC 43021 / DSM 3091 / JCM 11832 / MCB-3</strain>
    </source>
</reference>
<feature type="chain" id="PRO_0000322076" description="Riboflavin kinase">
    <location>
        <begin position="1"/>
        <end position="131"/>
    </location>
</feature>
<feature type="binding site" evidence="1">
    <location>
        <begin position="11"/>
        <end position="16"/>
    </location>
    <ligand>
        <name>CDP</name>
        <dbReference type="ChEBI" id="CHEBI:58069"/>
    </ligand>
</feature>
<feature type="binding site" evidence="1">
    <location>
        <position position="40"/>
    </location>
    <ligand>
        <name>Mg(2+)</name>
        <dbReference type="ChEBI" id="CHEBI:18420"/>
    </ligand>
</feature>
<feature type="binding site" evidence="1">
    <location>
        <position position="42"/>
    </location>
    <ligand>
        <name>Mg(2+)</name>
        <dbReference type="ChEBI" id="CHEBI:18420"/>
    </ligand>
</feature>
<feature type="binding site" evidence="1">
    <location>
        <position position="98"/>
    </location>
    <ligand>
        <name>FMN</name>
        <dbReference type="ChEBI" id="CHEBI:58210"/>
    </ligand>
</feature>
<feature type="binding site" evidence="1">
    <location>
        <position position="106"/>
    </location>
    <ligand>
        <name>FMN</name>
        <dbReference type="ChEBI" id="CHEBI:58210"/>
    </ligand>
</feature>
<feature type="binding site" evidence="1">
    <location>
        <begin position="111"/>
        <end position="114"/>
    </location>
    <ligand>
        <name>CDP</name>
        <dbReference type="ChEBI" id="CHEBI:58069"/>
    </ligand>
</feature>
<evidence type="ECO:0000255" key="1">
    <source>
        <dbReference type="HAMAP-Rule" id="MF_01285"/>
    </source>
</evidence>
<keyword id="KW-0285">Flavoprotein</keyword>
<keyword id="KW-0288">FMN</keyword>
<keyword id="KW-0418">Kinase</keyword>
<keyword id="KW-0460">Magnesium</keyword>
<keyword id="KW-0479">Metal-binding</keyword>
<keyword id="KW-0547">Nucleotide-binding</keyword>
<keyword id="KW-1185">Reference proteome</keyword>
<keyword id="KW-0808">Transferase</keyword>
<comment type="function">
    <text evidence="1">Catalyzes the CTP-dependent phosphorylation of riboflavin (vitamin B2) to form flavin mononucleotide (FMN).</text>
</comment>
<comment type="catalytic activity">
    <reaction evidence="1">
        <text>riboflavin + CTP = CDP + FMN + H(+)</text>
        <dbReference type="Rhea" id="RHEA:25021"/>
        <dbReference type="ChEBI" id="CHEBI:15378"/>
        <dbReference type="ChEBI" id="CHEBI:37563"/>
        <dbReference type="ChEBI" id="CHEBI:57986"/>
        <dbReference type="ChEBI" id="CHEBI:58069"/>
        <dbReference type="ChEBI" id="CHEBI:58210"/>
        <dbReference type="EC" id="2.7.1.161"/>
    </reaction>
</comment>
<comment type="cofactor">
    <cofactor evidence="1">
        <name>Mg(2+)</name>
        <dbReference type="ChEBI" id="CHEBI:18420"/>
    </cofactor>
    <text evidence="1">Binds 1 Mg(2+) ion per subunit.</text>
</comment>
<comment type="pathway">
    <text evidence="1">Cofactor biosynthesis; FMN biosynthesis; FMN from riboflavin (CTP route): step 1/1.</text>
</comment>
<comment type="similarity">
    <text evidence="1">Belongs to the archaeal riboflavin kinase family.</text>
</comment>
<name>RIFK_METST</name>
<sequence>MLSFEGKVSSGLQKAGQFMEKEVYKKQYLDKLGFIPYHGTLNIKLSNNITLNLDNLHDKLKRIHGNGSFGDVLFLEAYLSTIDEKITKKGAILFPVKTVYDTDTLEYVSSEKLRDTLNLKDGDKVIIKIEK</sequence>
<dbReference type="EC" id="2.7.1.161" evidence="1"/>
<dbReference type="EMBL" id="CP000102">
    <property type="protein sequence ID" value="ABC56594.1"/>
    <property type="molecule type" value="Genomic_DNA"/>
</dbReference>
<dbReference type="RefSeq" id="WP_011405793.1">
    <property type="nucleotide sequence ID" value="NC_007681.1"/>
</dbReference>
<dbReference type="SMR" id="Q2NHN9"/>
<dbReference type="STRING" id="339860.Msp_0177"/>
<dbReference type="KEGG" id="mst:Msp_0177"/>
<dbReference type="eggNOG" id="arCOG01904">
    <property type="taxonomic scope" value="Archaea"/>
</dbReference>
<dbReference type="HOGENOM" id="CLU_140165_0_0_2"/>
<dbReference type="OrthoDB" id="30955at2157"/>
<dbReference type="UniPathway" id="UPA00276">
    <property type="reaction ID" value="UER00929"/>
</dbReference>
<dbReference type="Proteomes" id="UP000001931">
    <property type="component" value="Chromosome"/>
</dbReference>
<dbReference type="GO" id="GO:0000287">
    <property type="term" value="F:magnesium ion binding"/>
    <property type="evidence" value="ECO:0007669"/>
    <property type="project" value="UniProtKB-UniRule"/>
</dbReference>
<dbReference type="GO" id="GO:0000166">
    <property type="term" value="F:nucleotide binding"/>
    <property type="evidence" value="ECO:0007669"/>
    <property type="project" value="UniProtKB-UniRule"/>
</dbReference>
<dbReference type="GO" id="GO:0008531">
    <property type="term" value="F:riboflavin kinase activity"/>
    <property type="evidence" value="ECO:0007669"/>
    <property type="project" value="InterPro"/>
</dbReference>
<dbReference type="GO" id="GO:0009398">
    <property type="term" value="P:FMN biosynthetic process"/>
    <property type="evidence" value="ECO:0007669"/>
    <property type="project" value="UniProtKB-UniRule"/>
</dbReference>
<dbReference type="GO" id="GO:0009231">
    <property type="term" value="P:riboflavin biosynthetic process"/>
    <property type="evidence" value="ECO:0007669"/>
    <property type="project" value="InterPro"/>
</dbReference>
<dbReference type="Gene3D" id="2.40.30.30">
    <property type="entry name" value="Riboflavin kinase-like"/>
    <property type="match status" value="1"/>
</dbReference>
<dbReference type="HAMAP" id="MF_01285">
    <property type="entry name" value="Riboflavin_kinase"/>
    <property type="match status" value="1"/>
</dbReference>
<dbReference type="InterPro" id="IPR039063">
    <property type="entry name" value="RibK_CTP-dep"/>
</dbReference>
<dbReference type="InterPro" id="IPR023470">
    <property type="entry name" value="Riboflavin_kinase_archaeal"/>
</dbReference>
<dbReference type="InterPro" id="IPR023602">
    <property type="entry name" value="Riboflavin_kinase_CTP-dep"/>
</dbReference>
<dbReference type="InterPro" id="IPR023465">
    <property type="entry name" value="Riboflavin_kinase_dom_sf"/>
</dbReference>
<dbReference type="PANTHER" id="PTHR40706">
    <property type="entry name" value="RIBOFLAVIN KINASE"/>
    <property type="match status" value="1"/>
</dbReference>
<dbReference type="PANTHER" id="PTHR40706:SF1">
    <property type="entry name" value="RIBOFLAVIN KINASE"/>
    <property type="match status" value="1"/>
</dbReference>
<dbReference type="Pfam" id="PF01982">
    <property type="entry name" value="CTP-dep_RFKase"/>
    <property type="match status" value="1"/>
</dbReference>
<dbReference type="SUPFAM" id="SSF82114">
    <property type="entry name" value="Riboflavin kinase-like"/>
    <property type="match status" value="1"/>
</dbReference>
<gene>
    <name evidence="1" type="primary">ribK</name>
    <name type="ordered locus">Msp_0177</name>
</gene>
<organism>
    <name type="scientific">Methanosphaera stadtmanae (strain ATCC 43021 / DSM 3091 / JCM 11832 / MCB-3)</name>
    <dbReference type="NCBI Taxonomy" id="339860"/>
    <lineage>
        <taxon>Archaea</taxon>
        <taxon>Methanobacteriati</taxon>
        <taxon>Methanobacteriota</taxon>
        <taxon>Methanomada group</taxon>
        <taxon>Methanobacteria</taxon>
        <taxon>Methanobacteriales</taxon>
        <taxon>Methanobacteriaceae</taxon>
        <taxon>Methanosphaera</taxon>
    </lineage>
</organism>
<protein>
    <recommendedName>
        <fullName evidence="1">Riboflavin kinase</fullName>
        <shortName evidence="1">RFK</shortName>
        <ecNumber evidence="1">2.7.1.161</ecNumber>
    </recommendedName>
    <alternativeName>
        <fullName evidence="1">CTP-dependent riboflavin kinase</fullName>
    </alternativeName>
    <alternativeName>
        <fullName evidence="1">CTP:riboflavin 5'-phosphotransferase</fullName>
    </alternativeName>
    <alternativeName>
        <fullName evidence="1">Flavokinase</fullName>
    </alternativeName>
</protein>
<accession>Q2NHN9</accession>